<protein>
    <recommendedName>
        <fullName evidence="11">Non-specific lipid transfer protein GPI-anchored 5</fullName>
        <shortName evidence="11">AtLTPG-5</shortName>
        <shortName evidence="11">Protein LTP-GPI-ANCHORED 5</shortName>
    </recommendedName>
    <alternativeName>
        <fullName evidence="10">Xylogen like protein 12</fullName>
        <shortName evidence="10">AtXYLP12</shortName>
        <shortName evidence="10">AtXYP8</shortName>
    </alternativeName>
</protein>
<feature type="signal peptide" evidence="2">
    <location>
        <begin position="1"/>
        <end position="24"/>
    </location>
</feature>
<feature type="chain" id="PRO_5015099827" description="Non-specific lipid transfer protein GPI-anchored 5">
    <location>
        <begin position="25"/>
        <end position="146"/>
    </location>
</feature>
<feature type="propeptide" id="PRO_0000451638" description="Removed in mature form" evidence="2">
    <location>
        <begin position="147"/>
        <end position="170"/>
    </location>
</feature>
<feature type="region of interest" description="Disordered" evidence="4">
    <location>
        <begin position="105"/>
        <end position="148"/>
    </location>
</feature>
<feature type="lipid moiety-binding region" description="GPI-anchor amidated serine" evidence="2">
    <location>
        <position position="146"/>
    </location>
</feature>
<feature type="glycosylation site" description="N-linked (GlcNAc...) asparagine" evidence="3">
    <location>
        <position position="45"/>
    </location>
</feature>
<feature type="glycosylation site" description="N-linked (GlcNAc...) asparagine" evidence="3">
    <location>
        <position position="84"/>
    </location>
</feature>
<feature type="glycosylation site" description="N-linked (GlcNAc...) asparagine" evidence="3">
    <location>
        <position position="124"/>
    </location>
</feature>
<feature type="glycosylation site" description="N-linked (GlcNAc...) asparagine" evidence="3">
    <location>
        <position position="130"/>
    </location>
</feature>
<feature type="disulfide bond" evidence="1">
    <location>
        <begin position="28"/>
        <end position="69"/>
    </location>
</feature>
<feature type="disulfide bond" evidence="1">
    <location>
        <begin position="38"/>
        <end position="53"/>
    </location>
</feature>
<feature type="disulfide bond" evidence="1">
    <location>
        <begin position="54"/>
        <end position="95"/>
    </location>
</feature>
<feature type="disulfide bond" evidence="1">
    <location>
        <begin position="67"/>
        <end position="105"/>
    </location>
</feature>
<organism>
    <name type="scientific">Arabidopsis thaliana</name>
    <name type="common">Mouse-ear cress</name>
    <dbReference type="NCBI Taxonomy" id="3702"/>
    <lineage>
        <taxon>Eukaryota</taxon>
        <taxon>Viridiplantae</taxon>
        <taxon>Streptophyta</taxon>
        <taxon>Embryophyta</taxon>
        <taxon>Tracheophyta</taxon>
        <taxon>Spermatophyta</taxon>
        <taxon>Magnoliopsida</taxon>
        <taxon>eudicotyledons</taxon>
        <taxon>Gunneridae</taxon>
        <taxon>Pentapetalae</taxon>
        <taxon>rosids</taxon>
        <taxon>malvids</taxon>
        <taxon>Brassicales</taxon>
        <taxon>Brassicaceae</taxon>
        <taxon>Camelineae</taxon>
        <taxon>Arabidopsis</taxon>
    </lineage>
</organism>
<dbReference type="EMBL" id="AF083791">
    <property type="protein sequence ID" value="AAN60349.1"/>
    <property type="status" value="ALT_INIT"/>
    <property type="molecule type" value="mRNA"/>
</dbReference>
<dbReference type="EMBL" id="AB246327">
    <property type="protein sequence ID" value="BAE73264.1"/>
    <property type="molecule type" value="mRNA"/>
</dbReference>
<dbReference type="EMBL" id="AP000731">
    <property type="protein sequence ID" value="BAB01475.1"/>
    <property type="molecule type" value="Genomic_DNA"/>
</dbReference>
<dbReference type="EMBL" id="CP002686">
    <property type="protein sequence ID" value="AEE76657.1"/>
    <property type="molecule type" value="Genomic_DNA"/>
</dbReference>
<dbReference type="EMBL" id="AY045650">
    <property type="protein sequence ID" value="AAK74008.1"/>
    <property type="molecule type" value="mRNA"/>
</dbReference>
<dbReference type="EMBL" id="AY079122">
    <property type="protein sequence ID" value="AAL79604.1"/>
    <property type="molecule type" value="mRNA"/>
</dbReference>
<dbReference type="EMBL" id="AY085883">
    <property type="protein sequence ID" value="AAM63095.1"/>
    <property type="status" value="ALT_INIT"/>
    <property type="molecule type" value="mRNA"/>
</dbReference>
<dbReference type="RefSeq" id="NP_566712.1">
    <property type="nucleotide sequence ID" value="NM_113159.4"/>
</dbReference>
<dbReference type="SMR" id="Q9LJ86"/>
<dbReference type="FunCoup" id="Q9LJ86">
    <property type="interactions" value="18"/>
</dbReference>
<dbReference type="STRING" id="3702.Q9LJ86"/>
<dbReference type="GlyCosmos" id="Q9LJ86">
    <property type="glycosylation" value="4 sites, No reported glycans"/>
</dbReference>
<dbReference type="GlyGen" id="Q9LJ86">
    <property type="glycosylation" value="4 sites"/>
</dbReference>
<dbReference type="iPTMnet" id="Q9LJ86"/>
<dbReference type="PaxDb" id="3702-AT3G22600.1"/>
<dbReference type="ProteomicsDB" id="174818"/>
<dbReference type="EnsemblPlants" id="AT3G22600.1">
    <property type="protein sequence ID" value="AT3G22600.1"/>
    <property type="gene ID" value="AT3G22600"/>
</dbReference>
<dbReference type="GeneID" id="821832"/>
<dbReference type="Gramene" id="AT3G22600.1">
    <property type="protein sequence ID" value="AT3G22600.1"/>
    <property type="gene ID" value="AT3G22600"/>
</dbReference>
<dbReference type="KEGG" id="ath:AT3G22600"/>
<dbReference type="Araport" id="AT3G22600"/>
<dbReference type="TAIR" id="AT3G22600">
    <property type="gene designation" value="LTPG5"/>
</dbReference>
<dbReference type="eggNOG" id="ENOG502S0AW">
    <property type="taxonomic scope" value="Eukaryota"/>
</dbReference>
<dbReference type="HOGENOM" id="CLU_089796_3_0_1"/>
<dbReference type="InParanoid" id="Q9LJ86"/>
<dbReference type="OMA" id="MKMGMGL"/>
<dbReference type="PhylomeDB" id="Q9LJ86"/>
<dbReference type="PRO" id="PR:Q9LJ86"/>
<dbReference type="Proteomes" id="UP000006548">
    <property type="component" value="Chromosome 3"/>
</dbReference>
<dbReference type="ExpressionAtlas" id="Q9LJ86">
    <property type="expression patterns" value="baseline and differential"/>
</dbReference>
<dbReference type="GO" id="GO:0005829">
    <property type="term" value="C:cytosol"/>
    <property type="evidence" value="ECO:0007005"/>
    <property type="project" value="TAIR"/>
</dbReference>
<dbReference type="GO" id="GO:0005886">
    <property type="term" value="C:plasma membrane"/>
    <property type="evidence" value="ECO:0007669"/>
    <property type="project" value="UniProtKB-SubCell"/>
</dbReference>
<dbReference type="GO" id="GO:0098552">
    <property type="term" value="C:side of membrane"/>
    <property type="evidence" value="ECO:0007669"/>
    <property type="project" value="UniProtKB-KW"/>
</dbReference>
<dbReference type="GO" id="GO:0008289">
    <property type="term" value="F:lipid binding"/>
    <property type="evidence" value="ECO:0007669"/>
    <property type="project" value="InterPro"/>
</dbReference>
<dbReference type="GO" id="GO:0050832">
    <property type="term" value="P:defense response to fungus"/>
    <property type="evidence" value="ECO:0000315"/>
    <property type="project" value="UniProtKB"/>
</dbReference>
<dbReference type="GO" id="GO:0006869">
    <property type="term" value="P:lipid transport"/>
    <property type="evidence" value="ECO:0007669"/>
    <property type="project" value="InterPro"/>
</dbReference>
<dbReference type="GO" id="GO:0140426">
    <property type="term" value="P:pathogen-associated molecular pattern receptor signaling pathway"/>
    <property type="evidence" value="ECO:0000270"/>
    <property type="project" value="UniProtKB"/>
</dbReference>
<dbReference type="GO" id="GO:0002237">
    <property type="term" value="P:response to molecule of bacterial origin"/>
    <property type="evidence" value="ECO:0000270"/>
    <property type="project" value="UniProtKB"/>
</dbReference>
<dbReference type="GO" id="GO:0002240">
    <property type="term" value="P:response to molecule of oomycetes origin"/>
    <property type="evidence" value="ECO:0000270"/>
    <property type="project" value="UniProtKB"/>
</dbReference>
<dbReference type="GO" id="GO:0009624">
    <property type="term" value="P:response to nematode"/>
    <property type="evidence" value="ECO:0000314"/>
    <property type="project" value="TAIR"/>
</dbReference>
<dbReference type="CDD" id="cd00010">
    <property type="entry name" value="AAI_LTSS"/>
    <property type="match status" value="1"/>
</dbReference>
<dbReference type="FunFam" id="1.10.110.10:FF:000001">
    <property type="entry name" value="Bifunctional inhibitor/lipid-transfer protein/seed storage 2S albumin superfamily protein"/>
    <property type="match status" value="1"/>
</dbReference>
<dbReference type="Gene3D" id="1.10.110.10">
    <property type="entry name" value="Plant lipid-transfer and hydrophobic proteins"/>
    <property type="match status" value="1"/>
</dbReference>
<dbReference type="InterPro" id="IPR036312">
    <property type="entry name" value="Bifun_inhib/LTP/seed_sf"/>
</dbReference>
<dbReference type="InterPro" id="IPR016140">
    <property type="entry name" value="Bifunc_inhib/LTP/seed_store"/>
</dbReference>
<dbReference type="InterPro" id="IPR043325">
    <property type="entry name" value="LTSS"/>
</dbReference>
<dbReference type="InterPro" id="IPR000528">
    <property type="entry name" value="Plant_nsLTP"/>
</dbReference>
<dbReference type="PANTHER" id="PTHR33044">
    <property type="entry name" value="BIFUNCTIONAL INHIBITOR/LIPID-TRANSFER PROTEIN/SEED STORAGE 2S ALBUMIN SUPERFAMILY PROTEIN-RELATED"/>
    <property type="match status" value="1"/>
</dbReference>
<dbReference type="Pfam" id="PF14368">
    <property type="entry name" value="LTP_2"/>
    <property type="match status" value="1"/>
</dbReference>
<dbReference type="PRINTS" id="PR00382">
    <property type="entry name" value="LIPIDTRNSFER"/>
</dbReference>
<dbReference type="SMART" id="SM00499">
    <property type="entry name" value="AAI"/>
    <property type="match status" value="1"/>
</dbReference>
<dbReference type="SUPFAM" id="SSF47699">
    <property type="entry name" value="Bifunctional inhibitor/lipid-transfer protein/seed storage 2S albumin"/>
    <property type="match status" value="1"/>
</dbReference>
<comment type="function">
    <text evidence="8 9">Lipid transfer protein involved in seed and ovule maturation and development, probably by regulating the fatty acids homeostasis during suberin and sporopollenin biosynthesis or deposition (PubMed:24460633). Contributes to pre-invasive defense against some non-host powdery mildew pathogens by preventing the penetration of the epidermal cell wall by the fungal agents (e.g. Blumeria graminis f. sp. hordei (Bgh)) (PubMed:30102837).</text>
</comment>
<comment type="subcellular location">
    <subcellularLocation>
        <location evidence="2">Cell membrane</location>
        <topology evidence="2">Lipid-anchor</topology>
        <topology evidence="2">GPI-anchor</topology>
    </subcellularLocation>
</comment>
<comment type="tissue specificity">
    <text evidence="6 7">Expressed in seedlings, preferentially in the endodermis of hypocotyls and roots, as well as in anthers, sepals and flower tori.</text>
</comment>
<comment type="developmental stage">
    <text evidence="6 7">In roots, restricted to the endodermis/pericycle above the middle of the differentiation zone and the regions where new lateral roots are emerging (PubMed:21558309). Accumulates in the abscission zone of young siliques (PubMed:21558309, PubMed:23893219). Expressed in senescing leaves (PubMed:23893219).</text>
</comment>
<comment type="induction">
    <text evidence="5">Induced by Phytophthora parasitica-derived necrosis and ethylene-inducing peptide (NLPPp) and microbe-associated molecular patterns (e.g. flg22).</text>
</comment>
<comment type="disruption phenotype">
    <text evidence="8 9">Increased susceptibility to penetration of the epidermal cell wall by the non-host mildew fungal agent Blumeria graminis f. sp. hordei (Bgh) (PubMed:30102837). Increased salt permeability in shrunken and deformed seeds, with abnormal hair-like outgrowths (PubMed:24460633).</text>
</comment>
<comment type="similarity">
    <text evidence="12">Belongs to the plant LTP family.</text>
</comment>
<comment type="sequence caution" evidence="12">
    <conflict type="erroneous initiation">
        <sequence resource="EMBL-CDS" id="AAM63095"/>
    </conflict>
    <text>Truncated N-terminus.</text>
</comment>
<comment type="sequence caution" evidence="12">
    <conflict type="erroneous initiation">
        <sequence resource="EMBL-CDS" id="AAN60349"/>
    </conflict>
    <text>Truncated N-terminus.</text>
</comment>
<proteinExistence type="evidence at transcript level"/>
<sequence length="170" mass="17306">MKMEMGLVFLTVFMAVMSSTMVSAQSSCTNALISMSPCLNYITGNSTSPNQQCCNQLSRVVQSSPDCLCQVLNGGGSQLGINVNQTQALGLPRACNVQTPPVSRCNTGGGGGGSTSDSPAESPNSSGPGNGSKTVPVGEGDGPPSSDGSSIKFSFPLIAFFSAVSYMAIF</sequence>
<gene>
    <name evidence="11" type="primary">LTPG5</name>
    <name evidence="10" type="synonym">XYLP12</name>
    <name evidence="10" type="synonym">XYP8</name>
    <name evidence="13" type="ordered locus">At3g22600</name>
    <name evidence="14" type="ORF">F16J14.17</name>
</gene>
<evidence type="ECO:0000250" key="1">
    <source>
        <dbReference type="UniProtKB" id="A0A0B4JDK1"/>
    </source>
</evidence>
<evidence type="ECO:0000255" key="2"/>
<evidence type="ECO:0000255" key="3">
    <source>
        <dbReference type="PROSITE-ProRule" id="PRU00498"/>
    </source>
</evidence>
<evidence type="ECO:0000256" key="4">
    <source>
        <dbReference type="SAM" id="MobiDB-lite"/>
    </source>
</evidence>
<evidence type="ECO:0000269" key="5">
    <source>
    </source>
</evidence>
<evidence type="ECO:0000269" key="6">
    <source>
    </source>
</evidence>
<evidence type="ECO:0000269" key="7">
    <source>
    </source>
</evidence>
<evidence type="ECO:0000269" key="8">
    <source>
    </source>
</evidence>
<evidence type="ECO:0000269" key="9">
    <source>
    </source>
</evidence>
<evidence type="ECO:0000303" key="10">
    <source>
    </source>
</evidence>
<evidence type="ECO:0000303" key="11">
    <source>
    </source>
</evidence>
<evidence type="ECO:0000305" key="12"/>
<evidence type="ECO:0000312" key="13">
    <source>
        <dbReference type="Araport" id="AT3G22600"/>
    </source>
</evidence>
<evidence type="ECO:0000312" key="14">
    <source>
        <dbReference type="EMBL" id="BAB01475.1"/>
    </source>
</evidence>
<reference key="1">
    <citation type="submission" date="1998-08" db="EMBL/GenBank/DDBJ databases">
        <title>Signal Peptide Selection derived cDNAs from Arabidopsis thaliana leaves and guard cells.</title>
        <authorList>
            <person name="Stracke R."/>
            <person name="Palme K."/>
        </authorList>
    </citation>
    <scope>NUCLEOTIDE SEQUENCE [MRNA]</scope>
</reference>
<reference key="2">
    <citation type="journal article" date="2011" name="Plant Cell Physiol.">
        <title>Expression and genome-wide analysis of the xylogen-type gene family.</title>
        <authorList>
            <person name="Kobayashi Y."/>
            <person name="Motose H."/>
            <person name="Iwamoto K."/>
            <person name="Fukuda H."/>
        </authorList>
    </citation>
    <scope>NUCLEOTIDE SEQUENCE [MRNA]</scope>
    <scope>TISSUE SPECIFICITY</scope>
    <scope>DEVELOPMENTAL STAGE</scope>
    <scope>GENE FAMILY</scope>
    <scope>NOMENCLATURE</scope>
    <source>
        <strain>cv. Columbia</strain>
    </source>
</reference>
<reference key="3">
    <citation type="journal article" date="2000" name="DNA Res.">
        <title>Structural analysis of Arabidopsis thaliana chromosome 3. II. Sequence features of the 4,251,695 bp regions covered by 90 P1, TAC and BAC clones.</title>
        <authorList>
            <person name="Kaneko T."/>
            <person name="Katoh T."/>
            <person name="Sato S."/>
            <person name="Nakamura Y."/>
            <person name="Asamizu E."/>
            <person name="Tabata S."/>
        </authorList>
    </citation>
    <scope>NUCLEOTIDE SEQUENCE [LARGE SCALE GENOMIC DNA]</scope>
    <source>
        <strain>cv. Columbia</strain>
    </source>
</reference>
<reference key="4">
    <citation type="journal article" date="2017" name="Plant J.">
        <title>Araport11: a complete reannotation of the Arabidopsis thaliana reference genome.</title>
        <authorList>
            <person name="Cheng C.Y."/>
            <person name="Krishnakumar V."/>
            <person name="Chan A.P."/>
            <person name="Thibaud-Nissen F."/>
            <person name="Schobel S."/>
            <person name="Town C.D."/>
        </authorList>
    </citation>
    <scope>GENOME REANNOTATION</scope>
    <source>
        <strain>cv. Columbia</strain>
    </source>
</reference>
<reference key="5">
    <citation type="journal article" date="2003" name="Science">
        <title>Empirical analysis of transcriptional activity in the Arabidopsis genome.</title>
        <authorList>
            <person name="Yamada K."/>
            <person name="Lim J."/>
            <person name="Dale J.M."/>
            <person name="Chen H."/>
            <person name="Shinn P."/>
            <person name="Palm C.J."/>
            <person name="Southwick A.M."/>
            <person name="Wu H.C."/>
            <person name="Kim C.J."/>
            <person name="Nguyen M."/>
            <person name="Pham P.K."/>
            <person name="Cheuk R.F."/>
            <person name="Karlin-Newmann G."/>
            <person name="Liu S.X."/>
            <person name="Lam B."/>
            <person name="Sakano H."/>
            <person name="Wu T."/>
            <person name="Yu G."/>
            <person name="Miranda M."/>
            <person name="Quach H.L."/>
            <person name="Tripp M."/>
            <person name="Chang C.H."/>
            <person name="Lee J.M."/>
            <person name="Toriumi M.J."/>
            <person name="Chan M.M."/>
            <person name="Tang C.C."/>
            <person name="Onodera C.S."/>
            <person name="Deng J.M."/>
            <person name="Akiyama K."/>
            <person name="Ansari Y."/>
            <person name="Arakawa T."/>
            <person name="Banh J."/>
            <person name="Banno F."/>
            <person name="Bowser L."/>
            <person name="Brooks S.Y."/>
            <person name="Carninci P."/>
            <person name="Chao Q."/>
            <person name="Choy N."/>
            <person name="Enju A."/>
            <person name="Goldsmith A.D."/>
            <person name="Gurjal M."/>
            <person name="Hansen N.F."/>
            <person name="Hayashizaki Y."/>
            <person name="Johnson-Hopson C."/>
            <person name="Hsuan V.W."/>
            <person name="Iida K."/>
            <person name="Karnes M."/>
            <person name="Khan S."/>
            <person name="Koesema E."/>
            <person name="Ishida J."/>
            <person name="Jiang P.X."/>
            <person name="Jones T."/>
            <person name="Kawai J."/>
            <person name="Kamiya A."/>
            <person name="Meyers C."/>
            <person name="Nakajima M."/>
            <person name="Narusaka M."/>
            <person name="Seki M."/>
            <person name="Sakurai T."/>
            <person name="Satou M."/>
            <person name="Tamse R."/>
            <person name="Vaysberg M."/>
            <person name="Wallender E.K."/>
            <person name="Wong C."/>
            <person name="Yamamura Y."/>
            <person name="Yuan S."/>
            <person name="Shinozaki K."/>
            <person name="Davis R.W."/>
            <person name="Theologis A."/>
            <person name="Ecker J.R."/>
        </authorList>
    </citation>
    <scope>NUCLEOTIDE SEQUENCE [LARGE SCALE MRNA]</scope>
    <source>
        <strain>cv. Columbia</strain>
    </source>
</reference>
<reference key="6">
    <citation type="submission" date="2002-03" db="EMBL/GenBank/DDBJ databases">
        <title>Full-length cDNA from Arabidopsis thaliana.</title>
        <authorList>
            <person name="Brover V.V."/>
            <person name="Troukhan M.E."/>
            <person name="Alexandrov N.A."/>
            <person name="Lu Y.-P."/>
            <person name="Flavell R.B."/>
            <person name="Feldmann K.A."/>
        </authorList>
    </citation>
    <scope>NUCLEOTIDE SEQUENCE [LARGE SCALE MRNA]</scope>
</reference>
<reference key="7">
    <citation type="journal article" date="2006" name="Plant Cell">
        <title>Phytotoxicity and innate immune responses induced by Nep1-like proteins.</title>
        <authorList>
            <person name="Qutob D."/>
            <person name="Kemmerling B."/>
            <person name="Brunner F."/>
            <person name="Kuefner I."/>
            <person name="Engelhardt S."/>
            <person name="Gust A.A."/>
            <person name="Luberacki B."/>
            <person name="Seitz H.U."/>
            <person name="Stahl D."/>
            <person name="Rauhut T."/>
            <person name="Glawischnig E."/>
            <person name="Schween G."/>
            <person name="Lacombe B."/>
            <person name="Watanabe N."/>
            <person name="Lam E."/>
            <person name="Schlichting R."/>
            <person name="Scheel D."/>
            <person name="Nau K."/>
            <person name="Dodt G."/>
            <person name="Hubert D."/>
            <person name="Gijzen M."/>
            <person name="Nuernberger T."/>
        </authorList>
    </citation>
    <scope>INDUCTION BY NLPPP AND FLG22</scope>
</reference>
<reference key="8">
    <citation type="journal article" date="2013" name="Arabidopsis Book">
        <title>Acyl-lipid metabolism.</title>
        <authorList>
            <person name="Li-Beisson Y."/>
            <person name="Shorrosh B."/>
            <person name="Beisson F."/>
            <person name="Andersson M.X."/>
            <person name="Arondel V."/>
            <person name="Bates P.D."/>
            <person name="Baud S."/>
            <person name="Bird D."/>
            <person name="Debono A."/>
            <person name="Durrett T.P."/>
            <person name="Franke R.B."/>
            <person name="Graham I.A."/>
            <person name="Katayama K."/>
            <person name="Kelly A.A."/>
            <person name="Larson T."/>
            <person name="Markham J.E."/>
            <person name="Miquel M."/>
            <person name="Molina I."/>
            <person name="Nishida I."/>
            <person name="Rowland O."/>
            <person name="Samuels L."/>
            <person name="Schmid K.M."/>
            <person name="Wada H."/>
            <person name="Welti R."/>
            <person name="Xu C."/>
            <person name="Zallot R."/>
            <person name="Ohlrogge J."/>
        </authorList>
    </citation>
    <scope>REVIEW</scope>
</reference>
<reference key="9">
    <citation type="journal article" date="2013" name="Plant Mol. Biol.">
        <title>Coexpression patterns indicate that GPI-anchored non-specific lipid transfer proteins are involved in accumulation of cuticular wax, suberin and sporopollenin.</title>
        <authorList>
            <person name="Edstam M.M."/>
            <person name="Blomqvist K."/>
            <person name="Ekloef A."/>
            <person name="Wennergren U."/>
            <person name="Edqvist J."/>
        </authorList>
    </citation>
    <scope>TISSUE SPECIFICITY</scope>
    <scope>DEVELOPMENTAL STAGE</scope>
    <scope>GENE FAMILY</scope>
    <scope>NOMENCLATURE</scope>
    <source>
        <strain>cv. Columbia</strain>
    </source>
</reference>
<reference key="10">
    <citation type="journal article" date="2014" name="Physiol. Plantarum">
        <title>Involvement of GPI-anchored lipid transfer proteins in the development of seed coats and pollen in Arabidopsis thaliana.</title>
        <authorList>
            <person name="Edstam M.M."/>
            <person name="Edqvist J."/>
        </authorList>
    </citation>
    <scope>FUNCTION</scope>
    <scope>DISRUPTION PHENOTYPE</scope>
    <scope>GENE FAMILY</scope>
    <source>
        <strain>cv. Columbia</strain>
    </source>
</reference>
<reference key="11">
    <citation type="journal article" date="2019" name="Mol. Plant Pathol.">
        <title>Involvement of lipid transfer proteins in resistance against a non-host powdery mildew in Arabidopsis thaliana.</title>
        <authorList>
            <person name="Fahlberg P."/>
            <person name="Buhot N."/>
            <person name="Johansson O.N."/>
            <person name="Andersson M.X."/>
        </authorList>
    </citation>
    <scope>FUNCTION</scope>
    <scope>DISRUPTION PHENOTYPE</scope>
    <scope>GENE FAMILY</scope>
    <scope>NOMENCLATURE</scope>
    <source>
        <strain>cv. Columbia</strain>
    </source>
</reference>
<keyword id="KW-1003">Cell membrane</keyword>
<keyword id="KW-1015">Disulfide bond</keyword>
<keyword id="KW-0325">Glycoprotein</keyword>
<keyword id="KW-0336">GPI-anchor</keyword>
<keyword id="KW-0449">Lipoprotein</keyword>
<keyword id="KW-0472">Membrane</keyword>
<keyword id="KW-0611">Plant defense</keyword>
<keyword id="KW-1185">Reference proteome</keyword>
<keyword id="KW-0732">Signal</keyword>
<accession>Q9LJ86</accession>
<accession>A0A178VB68</accession>
<accession>Q8H784</accession>
<accession>Q8LDP1</accession>
<name>LTPG5_ARATH</name>